<sequence>MASKIVMSSKTVKTSDEILCEGELEKRSDSLFQVWKKKRCVLTADRLRLFSGKTSPAKELFFHSILKVDCVEHTSKYVYFTIVTNYYKEIDFRCTVESCWNAAITMALIDFQNRRALQDFPRYRYQRSESEMPSEPGEQSALGP</sequence>
<comment type="function">
    <text evidence="4">Plays a role in regulating placenta growth. May act via its PH domain that competes with other PH domain-containing proteins, thereby preventing their binding to membrane lipids.</text>
</comment>
<comment type="subcellular location">
    <subcellularLocation>
        <location evidence="5">Cytoplasm</location>
    </subcellularLocation>
    <subcellularLocation>
        <location evidence="5">Membrane</location>
        <topology evidence="5">Peripheral membrane protein</topology>
    </subcellularLocation>
</comment>
<comment type="tissue specificity">
    <text evidence="3">Specifically expressed at high levels in extraembryonic tissues in the developing conceptus (at protein level). Expressed in placenta and yolc sac. Expressed at low levels in fetal liver and kidney.</text>
</comment>
<comment type="developmental stage">
    <text evidence="3 4">Expressed at high levels in the very early conceptus limited to polar trophectoderm. Strongly expressed in the ectoplacental cone shortly after implantation at 5.5 dpc, and the high expression remains restricted to the extraembryonic tissues at later stages. By 10.5 dpc expression is restricted to the labyrinthine trophoblast and the endodermal component of the visceral yolk sac. Between 12.5 and 14.4 dpc expression in placenta decreases, due to a number of expressing cells. On day 12 of gestation, the abundant expressing cells are trophoblast at the chorionic plate, and clustered type II trophoblast deeper in the labyrinth. Less expressed by terminally differentiated trophoblast. As early as 14.5 dpc, becomes confined to a monolayer of cells at the chorionic plate and to rare cells in septa that protrude into the labyrinth (at protein level).</text>
</comment>
<comment type="induction">
    <text evidence="6">Maternal Phlda2 allele is activated, while paternal Phlda2 is repressed due to genomic imprinting.</text>
</comment>
<comment type="domain">
    <text evidence="1">The PH domain binds phosphoinositides with a broad specificity. It may compete with the PH domain of some other proteins, thereby interfering with their binding to phosphatidylinositol 4,5-bisphosphate (PIP2) and phosphatidylinositol 3,4,5-trisphosphate (PIP3) (By similarity).</text>
</comment>
<comment type="disruption phenotype">
    <text evidence="4">Mice are viable, and show overgrowth of placentas with expansion of the spongiotrophoblast. These larger placentas do not confer a fetal growth advantage.</text>
</comment>
<comment type="miscellaneous">
    <text>The Phlda2 locus is imprinted. Loss of imprinting results in overexpression, leading to placental growth retardation phenotypes.</text>
</comment>
<comment type="similarity">
    <text evidence="7">Belongs to the PHLDA2 family.</text>
</comment>
<feature type="chain" id="PRO_0000053901" description="Pleckstrin homology-like domain family A member 2">
    <location>
        <begin position="1"/>
        <end position="144"/>
    </location>
</feature>
<feature type="domain" description="PH">
    <location>
        <begin position="18"/>
        <end position="111"/>
    </location>
</feature>
<feature type="modified residue" description="Phosphoserine" evidence="2">
    <location>
        <position position="140"/>
    </location>
</feature>
<feature type="mutagenesis site" description="Impairs the ability to rescue growth in cdc25ts mutant yeasts." evidence="5">
    <original>R</original>
    <variation>L</variation>
    <location>
        <position position="27"/>
    </location>
</feature>
<feature type="mutagenesis site" description="Impairs the ability to rescue growth in cdc25ts mutant yeasts." evidence="5">
    <original>K</original>
    <variation>A</variation>
    <location>
        <position position="38"/>
    </location>
</feature>
<feature type="mutagenesis site" description="Impairs the ability to rescue growth in cdc25ts mutant yeasts." evidence="5">
    <original>R</original>
    <variation>A</variation>
    <location>
        <position position="39"/>
    </location>
</feature>
<name>PHLA2_MOUSE</name>
<dbReference type="EMBL" id="AF002708">
    <property type="protein sequence ID" value="AAB86681.1"/>
    <property type="molecule type" value="Genomic_DNA"/>
</dbReference>
<dbReference type="EMBL" id="Y15443">
    <property type="protein sequence ID" value="CAA75634.1"/>
    <property type="molecule type" value="mRNA"/>
</dbReference>
<dbReference type="EMBL" id="AK131929">
    <property type="protein sequence ID" value="BAE20878.1"/>
    <property type="molecule type" value="mRNA"/>
</dbReference>
<dbReference type="EMBL" id="BC019141">
    <property type="protein sequence ID" value="AAH19141.1"/>
    <property type="molecule type" value="mRNA"/>
</dbReference>
<dbReference type="CCDS" id="CCDS22042.1"/>
<dbReference type="RefSeq" id="NP_033460.1">
    <property type="nucleotide sequence ID" value="NM_009434.2"/>
</dbReference>
<dbReference type="RefSeq" id="XP_006508660.1">
    <property type="nucleotide sequence ID" value="XM_006508597.2"/>
</dbReference>
<dbReference type="SMR" id="O08969"/>
<dbReference type="FunCoup" id="O08969">
    <property type="interactions" value="314"/>
</dbReference>
<dbReference type="STRING" id="10090.ENSMUSP00000010904"/>
<dbReference type="PhosphoSitePlus" id="O08969"/>
<dbReference type="PaxDb" id="10090-ENSMUSP00000010904"/>
<dbReference type="PeptideAtlas" id="O08969"/>
<dbReference type="ProteomicsDB" id="287932"/>
<dbReference type="Antibodypedia" id="1202">
    <property type="antibodies" value="306 antibodies from 33 providers"/>
</dbReference>
<dbReference type="DNASU" id="22113"/>
<dbReference type="Ensembl" id="ENSMUST00000010904.5">
    <property type="protein sequence ID" value="ENSMUSP00000010904.4"/>
    <property type="gene ID" value="ENSMUSG00000010760.6"/>
</dbReference>
<dbReference type="GeneID" id="22113"/>
<dbReference type="KEGG" id="mmu:22113"/>
<dbReference type="UCSC" id="uc009kpj.1">
    <property type="organism name" value="mouse"/>
</dbReference>
<dbReference type="AGR" id="MGI:1202307"/>
<dbReference type="CTD" id="7262"/>
<dbReference type="MGI" id="MGI:1202307">
    <property type="gene designation" value="Phlda2"/>
</dbReference>
<dbReference type="VEuPathDB" id="HostDB:ENSMUSG00000010760"/>
<dbReference type="eggNOG" id="ENOG502RXZA">
    <property type="taxonomic scope" value="Eukaryota"/>
</dbReference>
<dbReference type="GeneTree" id="ENSGT00440000039564"/>
<dbReference type="HOGENOM" id="CLU_062639_1_0_1"/>
<dbReference type="InParanoid" id="O08969"/>
<dbReference type="OMA" id="CWHAEIT"/>
<dbReference type="OrthoDB" id="9630709at2759"/>
<dbReference type="PhylomeDB" id="O08969"/>
<dbReference type="TreeFam" id="TF332320"/>
<dbReference type="BioGRID-ORCS" id="22113">
    <property type="hits" value="2 hits in 80 CRISPR screens"/>
</dbReference>
<dbReference type="ChiTaRS" id="Phlda2">
    <property type="organism name" value="mouse"/>
</dbReference>
<dbReference type="PRO" id="PR:O08969"/>
<dbReference type="Proteomes" id="UP000000589">
    <property type="component" value="Chromosome 7"/>
</dbReference>
<dbReference type="RNAct" id="O08969">
    <property type="molecule type" value="protein"/>
</dbReference>
<dbReference type="Bgee" id="ENSMUSG00000010760">
    <property type="expression patterns" value="Expressed in yolk sac and 97 other cell types or tissues"/>
</dbReference>
<dbReference type="ExpressionAtlas" id="O08969">
    <property type="expression patterns" value="baseline and differential"/>
</dbReference>
<dbReference type="GO" id="GO:0005737">
    <property type="term" value="C:cytoplasm"/>
    <property type="evidence" value="ECO:0000304"/>
    <property type="project" value="MGI"/>
</dbReference>
<dbReference type="GO" id="GO:0016020">
    <property type="term" value="C:membrane"/>
    <property type="evidence" value="ECO:0007669"/>
    <property type="project" value="UniProtKB-SubCell"/>
</dbReference>
<dbReference type="GO" id="GO:1901981">
    <property type="term" value="F:phosphatidylinositol phosphate binding"/>
    <property type="evidence" value="ECO:0007669"/>
    <property type="project" value="InterPro"/>
</dbReference>
<dbReference type="GO" id="GO:0009887">
    <property type="term" value="P:animal organ morphogenesis"/>
    <property type="evidence" value="ECO:0000315"/>
    <property type="project" value="MGI"/>
</dbReference>
<dbReference type="GO" id="GO:0001890">
    <property type="term" value="P:placenta development"/>
    <property type="evidence" value="ECO:0000314"/>
    <property type="project" value="MGI"/>
</dbReference>
<dbReference type="GO" id="GO:0043065">
    <property type="term" value="P:positive regulation of apoptotic process"/>
    <property type="evidence" value="ECO:0007669"/>
    <property type="project" value="InterPro"/>
</dbReference>
<dbReference type="GO" id="GO:0030334">
    <property type="term" value="P:regulation of cell migration"/>
    <property type="evidence" value="ECO:0000314"/>
    <property type="project" value="MGI"/>
</dbReference>
<dbReference type="GO" id="GO:0045995">
    <property type="term" value="P:regulation of embryonic development"/>
    <property type="evidence" value="ECO:0000314"/>
    <property type="project" value="MGI"/>
</dbReference>
<dbReference type="GO" id="GO:0010468">
    <property type="term" value="P:regulation of gene expression"/>
    <property type="evidence" value="ECO:0000314"/>
    <property type="project" value="MGI"/>
</dbReference>
<dbReference type="GO" id="GO:0070873">
    <property type="term" value="P:regulation of glycogen metabolic process"/>
    <property type="evidence" value="ECO:0000314"/>
    <property type="project" value="MGI"/>
</dbReference>
<dbReference type="GO" id="GO:0060721">
    <property type="term" value="P:regulation of spongiotrophoblast cell proliferation"/>
    <property type="evidence" value="ECO:0000315"/>
    <property type="project" value="MGI"/>
</dbReference>
<dbReference type="CDD" id="cd00821">
    <property type="entry name" value="PH"/>
    <property type="match status" value="1"/>
</dbReference>
<dbReference type="FunFam" id="2.30.29.30:FF:000270">
    <property type="entry name" value="Pleckstrin homology-like domain family A member 3"/>
    <property type="match status" value="1"/>
</dbReference>
<dbReference type="Gene3D" id="2.30.29.30">
    <property type="entry name" value="Pleckstrin-homology domain (PH domain)/Phosphotyrosine-binding domain (PTB)"/>
    <property type="match status" value="1"/>
</dbReference>
<dbReference type="InterPro" id="IPR011993">
    <property type="entry name" value="PH-like_dom_sf"/>
</dbReference>
<dbReference type="InterPro" id="IPR001849">
    <property type="entry name" value="PH_domain"/>
</dbReference>
<dbReference type="InterPro" id="IPR042832">
    <property type="entry name" value="PHLA1/2/3"/>
</dbReference>
<dbReference type="PANTHER" id="PTHR15478:SF8">
    <property type="entry name" value="PLECKSTRIN HOMOLOGY-LIKE DOMAIN FAMILY A MEMBER 2"/>
    <property type="match status" value="1"/>
</dbReference>
<dbReference type="PANTHER" id="PTHR15478">
    <property type="entry name" value="PLECKSTRIN HOMOLOGY-LIKE DOMAIN, PQ-RICH PROTEIN"/>
    <property type="match status" value="1"/>
</dbReference>
<dbReference type="SMART" id="SM00233">
    <property type="entry name" value="PH"/>
    <property type="match status" value="1"/>
</dbReference>
<dbReference type="SUPFAM" id="SSF50729">
    <property type="entry name" value="PH domain-like"/>
    <property type="match status" value="1"/>
</dbReference>
<protein>
    <recommendedName>
        <fullName>Pleckstrin homology-like domain family A member 2</fullName>
    </recommendedName>
    <alternativeName>
        <fullName>Imprinted in placenta and liver protein</fullName>
    </alternativeName>
    <alternativeName>
        <fullName>Protein 50C15</fullName>
    </alternativeName>
</protein>
<accession>O08969</accession>
<gene>
    <name type="primary">Phlda2</name>
    <name type="synonym">Ipl</name>
    <name type="synonym">Tssc3</name>
</gene>
<evidence type="ECO:0000250" key="1"/>
<evidence type="ECO:0000250" key="2">
    <source>
        <dbReference type="UniProtKB" id="Q53GA4"/>
    </source>
</evidence>
<evidence type="ECO:0000269" key="3">
    <source>
    </source>
</evidence>
<evidence type="ECO:0000269" key="4">
    <source>
    </source>
</evidence>
<evidence type="ECO:0000269" key="5">
    <source>
    </source>
</evidence>
<evidence type="ECO:0000269" key="6">
    <source>
    </source>
</evidence>
<evidence type="ECO:0000305" key="7"/>
<keyword id="KW-0963">Cytoplasm</keyword>
<keyword id="KW-0472">Membrane</keyword>
<keyword id="KW-0597">Phosphoprotein</keyword>
<keyword id="KW-1185">Reference proteome</keyword>
<proteinExistence type="evidence at protein level"/>
<organism>
    <name type="scientific">Mus musculus</name>
    <name type="common">Mouse</name>
    <dbReference type="NCBI Taxonomy" id="10090"/>
    <lineage>
        <taxon>Eukaryota</taxon>
        <taxon>Metazoa</taxon>
        <taxon>Chordata</taxon>
        <taxon>Craniata</taxon>
        <taxon>Vertebrata</taxon>
        <taxon>Euteleostomi</taxon>
        <taxon>Mammalia</taxon>
        <taxon>Eutheria</taxon>
        <taxon>Euarchontoglires</taxon>
        <taxon>Glires</taxon>
        <taxon>Rodentia</taxon>
        <taxon>Myomorpha</taxon>
        <taxon>Muroidea</taxon>
        <taxon>Muridae</taxon>
        <taxon>Murinae</taxon>
        <taxon>Mus</taxon>
        <taxon>Mus</taxon>
    </lineage>
</organism>
<reference key="1">
    <citation type="journal article" date="1997" name="Hum. Mol. Genet.">
        <title>The IPL gene on chromosome 11p15.5 is imprinted in humans and mice and is similar to TDAG51, implicated in Fas expression and apoptosis.</title>
        <authorList>
            <person name="Qian N."/>
            <person name="Frank D."/>
            <person name="O'Keefe D."/>
            <person name="Dao D."/>
            <person name="Zhao L."/>
            <person name="Yuan L."/>
            <person name="Wang Q."/>
            <person name="Keating M."/>
            <person name="Walsh C."/>
            <person name="Tycko B."/>
        </authorList>
    </citation>
    <scope>NUCLEOTIDE SEQUENCE [GENOMIC DNA]</scope>
</reference>
<reference key="2">
    <citation type="submission" date="1997-11" db="EMBL/GenBank/DDBJ databases">
        <authorList>
            <person name="Dunwoodie S.L."/>
            <person name="Beddington R.S.P."/>
        </authorList>
    </citation>
    <scope>NUCLEOTIDE SEQUENCE [MRNA]</scope>
    <source>
        <strain>C57BL/6 X DBA</strain>
    </source>
</reference>
<reference key="3">
    <citation type="journal article" date="2005" name="Science">
        <title>The transcriptional landscape of the mammalian genome.</title>
        <authorList>
            <person name="Carninci P."/>
            <person name="Kasukawa T."/>
            <person name="Katayama S."/>
            <person name="Gough J."/>
            <person name="Frith M.C."/>
            <person name="Maeda N."/>
            <person name="Oyama R."/>
            <person name="Ravasi T."/>
            <person name="Lenhard B."/>
            <person name="Wells C."/>
            <person name="Kodzius R."/>
            <person name="Shimokawa K."/>
            <person name="Bajic V.B."/>
            <person name="Brenner S.E."/>
            <person name="Batalov S."/>
            <person name="Forrest A.R."/>
            <person name="Zavolan M."/>
            <person name="Davis M.J."/>
            <person name="Wilming L.G."/>
            <person name="Aidinis V."/>
            <person name="Allen J.E."/>
            <person name="Ambesi-Impiombato A."/>
            <person name="Apweiler R."/>
            <person name="Aturaliya R.N."/>
            <person name="Bailey T.L."/>
            <person name="Bansal M."/>
            <person name="Baxter L."/>
            <person name="Beisel K.W."/>
            <person name="Bersano T."/>
            <person name="Bono H."/>
            <person name="Chalk A.M."/>
            <person name="Chiu K.P."/>
            <person name="Choudhary V."/>
            <person name="Christoffels A."/>
            <person name="Clutterbuck D.R."/>
            <person name="Crowe M.L."/>
            <person name="Dalla E."/>
            <person name="Dalrymple B.P."/>
            <person name="de Bono B."/>
            <person name="Della Gatta G."/>
            <person name="di Bernardo D."/>
            <person name="Down T."/>
            <person name="Engstrom P."/>
            <person name="Fagiolini M."/>
            <person name="Faulkner G."/>
            <person name="Fletcher C.F."/>
            <person name="Fukushima T."/>
            <person name="Furuno M."/>
            <person name="Futaki S."/>
            <person name="Gariboldi M."/>
            <person name="Georgii-Hemming P."/>
            <person name="Gingeras T.R."/>
            <person name="Gojobori T."/>
            <person name="Green R.E."/>
            <person name="Gustincich S."/>
            <person name="Harbers M."/>
            <person name="Hayashi Y."/>
            <person name="Hensch T.K."/>
            <person name="Hirokawa N."/>
            <person name="Hill D."/>
            <person name="Huminiecki L."/>
            <person name="Iacono M."/>
            <person name="Ikeo K."/>
            <person name="Iwama A."/>
            <person name="Ishikawa T."/>
            <person name="Jakt M."/>
            <person name="Kanapin A."/>
            <person name="Katoh M."/>
            <person name="Kawasawa Y."/>
            <person name="Kelso J."/>
            <person name="Kitamura H."/>
            <person name="Kitano H."/>
            <person name="Kollias G."/>
            <person name="Krishnan S.P."/>
            <person name="Kruger A."/>
            <person name="Kummerfeld S.K."/>
            <person name="Kurochkin I.V."/>
            <person name="Lareau L.F."/>
            <person name="Lazarevic D."/>
            <person name="Lipovich L."/>
            <person name="Liu J."/>
            <person name="Liuni S."/>
            <person name="McWilliam S."/>
            <person name="Madan Babu M."/>
            <person name="Madera M."/>
            <person name="Marchionni L."/>
            <person name="Matsuda H."/>
            <person name="Matsuzawa S."/>
            <person name="Miki H."/>
            <person name="Mignone F."/>
            <person name="Miyake S."/>
            <person name="Morris K."/>
            <person name="Mottagui-Tabar S."/>
            <person name="Mulder N."/>
            <person name="Nakano N."/>
            <person name="Nakauchi H."/>
            <person name="Ng P."/>
            <person name="Nilsson R."/>
            <person name="Nishiguchi S."/>
            <person name="Nishikawa S."/>
            <person name="Nori F."/>
            <person name="Ohara O."/>
            <person name="Okazaki Y."/>
            <person name="Orlando V."/>
            <person name="Pang K.C."/>
            <person name="Pavan W.J."/>
            <person name="Pavesi G."/>
            <person name="Pesole G."/>
            <person name="Petrovsky N."/>
            <person name="Piazza S."/>
            <person name="Reed J."/>
            <person name="Reid J.F."/>
            <person name="Ring B.Z."/>
            <person name="Ringwald M."/>
            <person name="Rost B."/>
            <person name="Ruan Y."/>
            <person name="Salzberg S.L."/>
            <person name="Sandelin A."/>
            <person name="Schneider C."/>
            <person name="Schoenbach C."/>
            <person name="Sekiguchi K."/>
            <person name="Semple C.A."/>
            <person name="Seno S."/>
            <person name="Sessa L."/>
            <person name="Sheng Y."/>
            <person name="Shibata Y."/>
            <person name="Shimada H."/>
            <person name="Shimada K."/>
            <person name="Silva D."/>
            <person name="Sinclair B."/>
            <person name="Sperling S."/>
            <person name="Stupka E."/>
            <person name="Sugiura K."/>
            <person name="Sultana R."/>
            <person name="Takenaka Y."/>
            <person name="Taki K."/>
            <person name="Tammoja K."/>
            <person name="Tan S.L."/>
            <person name="Tang S."/>
            <person name="Taylor M.S."/>
            <person name="Tegner J."/>
            <person name="Teichmann S.A."/>
            <person name="Ueda H.R."/>
            <person name="van Nimwegen E."/>
            <person name="Verardo R."/>
            <person name="Wei C.L."/>
            <person name="Yagi K."/>
            <person name="Yamanishi H."/>
            <person name="Zabarovsky E."/>
            <person name="Zhu S."/>
            <person name="Zimmer A."/>
            <person name="Hide W."/>
            <person name="Bult C."/>
            <person name="Grimmond S.M."/>
            <person name="Teasdale R.D."/>
            <person name="Liu E.T."/>
            <person name="Brusic V."/>
            <person name="Quackenbush J."/>
            <person name="Wahlestedt C."/>
            <person name="Mattick J.S."/>
            <person name="Hume D.A."/>
            <person name="Kai C."/>
            <person name="Sasaki D."/>
            <person name="Tomaru Y."/>
            <person name="Fukuda S."/>
            <person name="Kanamori-Katayama M."/>
            <person name="Suzuki M."/>
            <person name="Aoki J."/>
            <person name="Arakawa T."/>
            <person name="Iida J."/>
            <person name="Imamura K."/>
            <person name="Itoh M."/>
            <person name="Kato T."/>
            <person name="Kawaji H."/>
            <person name="Kawagashira N."/>
            <person name="Kawashima T."/>
            <person name="Kojima M."/>
            <person name="Kondo S."/>
            <person name="Konno H."/>
            <person name="Nakano K."/>
            <person name="Ninomiya N."/>
            <person name="Nishio T."/>
            <person name="Okada M."/>
            <person name="Plessy C."/>
            <person name="Shibata K."/>
            <person name="Shiraki T."/>
            <person name="Suzuki S."/>
            <person name="Tagami M."/>
            <person name="Waki K."/>
            <person name="Watahiki A."/>
            <person name="Okamura-Oho Y."/>
            <person name="Suzuki H."/>
            <person name="Kawai J."/>
            <person name="Hayashizaki Y."/>
        </authorList>
    </citation>
    <scope>NUCLEOTIDE SEQUENCE [LARGE SCALE MRNA]</scope>
    <source>
        <strain>C57BL/6J</strain>
    </source>
</reference>
<reference key="4">
    <citation type="journal article" date="2004" name="Genome Res.">
        <title>The status, quality, and expansion of the NIH full-length cDNA project: the Mammalian Gene Collection (MGC).</title>
        <authorList>
            <consortium name="The MGC Project Team"/>
        </authorList>
    </citation>
    <scope>NUCLEOTIDE SEQUENCE [LARGE SCALE MRNA]</scope>
    <source>
        <strain>FVB/N</strain>
        <tissue>Kidney</tissue>
    </source>
</reference>
<reference key="5">
    <citation type="journal article" date="1999" name="Mamm. Genome">
        <title>A novel pleckstrin homology-related gene family defined by Ipl/Tssc3, TDAG51, and Tih1: tissue-specific expression, chromosomal location, and parental imprinting.</title>
        <authorList>
            <person name="Frank D."/>
            <person name="Mendelsohn C.L."/>
            <person name="Ciccone E."/>
            <person name="Svensson K."/>
            <person name="Ohlsson R."/>
            <person name="Tycko B."/>
        </authorList>
    </citation>
    <scope>TISSUE SPECIFICITY</scope>
    <scope>DEVELOPMENTAL STAGE</scope>
</reference>
<reference key="6">
    <citation type="journal article" date="2002" name="J. Biol. Chem.">
        <title>Phosphoinositide binding by the pleckstrin homology domains of Ipl and Tih1.</title>
        <authorList>
            <person name="Saxena A."/>
            <person name="Morozov P."/>
            <person name="Frank D."/>
            <person name="Musalo R."/>
            <person name="Lemmon M.A."/>
            <person name="Skolnik E.Y."/>
            <person name="Tycko B."/>
        </authorList>
    </citation>
    <scope>PHOSPHOINOSITIDE-BINDING</scope>
    <scope>SUBCELLULAR LOCATION</scope>
    <scope>MUTAGENESIS OF ARG-27; LYS-38 AND ARG-39</scope>
</reference>
<reference key="7">
    <citation type="journal article" date="2002" name="Proc. Natl. Acad. Sci. U.S.A.">
        <title>Placental overgrowth in mice lacking the imprinted gene Ipl.</title>
        <authorList>
            <person name="Frank D."/>
            <person name="Fortino W."/>
            <person name="Clark L."/>
            <person name="Musalo R."/>
            <person name="Wang W."/>
            <person name="Saxena A."/>
            <person name="Li C.M."/>
            <person name="Reik W."/>
            <person name="Ludwig T."/>
            <person name="Tycko B."/>
        </authorList>
    </citation>
    <scope>FUNCTION</scope>
    <scope>DISRUPTION PHENOTYPE</scope>
    <scope>DEVELOPMENTAL STAGE</scope>
</reference>
<reference key="8">
    <citation type="journal article" date="2004" name="Mech. Dev.">
        <title>Placental growth retardation due to loss of imprinting of Phlda2.</title>
        <authorList>
            <person name="Salas M."/>
            <person name="John R."/>
            <person name="Saxena A."/>
            <person name="Barton S."/>
            <person name="Frank D."/>
            <person name="Fitzpatrick G."/>
            <person name="Higgins M.J."/>
            <person name="Tycko B."/>
        </authorList>
    </citation>
    <scope>INDUCTION</scope>
    <scope>IMPRINTING</scope>
</reference>